<accession>Q9XWC2</accession>
<reference key="1">
    <citation type="journal article" date="1998" name="Science">
        <title>Genome sequence of the nematode C. elegans: a platform for investigating biology.</title>
        <authorList>
            <consortium name="The C. elegans sequencing consortium"/>
        </authorList>
    </citation>
    <scope>NUCLEOTIDE SEQUENCE [LARGE SCALE GENOMIC DNA]</scope>
    <source>
        <strain>Bristol N2</strain>
    </source>
</reference>
<reference key="2">
    <citation type="journal article" date="2003" name="Nat. Biotechnol.">
        <title>Lectin affinity capture, isotope-coded tagging and mass spectrometry to identify N-linked glycoproteins.</title>
        <authorList>
            <person name="Kaji H."/>
            <person name="Saito H."/>
            <person name="Yamauchi Y."/>
            <person name="Shinkawa T."/>
            <person name="Taoka M."/>
            <person name="Hirabayashi J."/>
            <person name="Kasai K."/>
            <person name="Takahashi N."/>
            <person name="Isobe T."/>
        </authorList>
    </citation>
    <scope>GLYCOSYLATION [LARGE SCALE ANALYSIS] AT ASN-47</scope>
    <scope>IDENTIFICATION BY MASS SPECTROMETRY</scope>
    <source>
        <strain>Bristol N2</strain>
    </source>
</reference>
<reference key="3">
    <citation type="journal article" date="2005" name="Glycobiology">
        <title>Identification of the hydrophobic glycoproteins of Caenorhabditis elegans.</title>
        <authorList>
            <person name="Fan X."/>
            <person name="She Y.-M."/>
            <person name="Bagshaw R.D."/>
            <person name="Callahan J.W."/>
            <person name="Schachter H."/>
            <person name="Mahuran D.J."/>
        </authorList>
    </citation>
    <scope>GLYCOSYLATION [LARGE SCALE ANALYSIS] AT ASN-47</scope>
    <scope>IDENTIFICATION BY MASS SPECTROMETRY</scope>
</reference>
<reference key="4">
    <citation type="journal article" date="2007" name="Mol. Cell. Proteomics">
        <title>Proteomics reveals N-linked glycoprotein diversity in Caenorhabditis elegans and suggests an atypical translocation mechanism for integral membrane proteins.</title>
        <authorList>
            <person name="Kaji H."/>
            <person name="Kamiie J."/>
            <person name="Kawakami H."/>
            <person name="Kido K."/>
            <person name="Yamauchi Y."/>
            <person name="Shinkawa T."/>
            <person name="Taoka M."/>
            <person name="Takahashi N."/>
            <person name="Isobe T."/>
        </authorList>
    </citation>
    <scope>GLYCOSYLATION [LARGE SCALE ANALYSIS] AT ASN-47</scope>
    <scope>IDENTIFICATION BY MASS SPECTROMETRY</scope>
    <source>
        <strain>Bristol N2</strain>
    </source>
</reference>
<dbReference type="EMBL" id="AL032661">
    <property type="protein sequence ID" value="CAA21755.1"/>
    <property type="molecule type" value="Genomic_DNA"/>
</dbReference>
<dbReference type="PIR" id="T27367">
    <property type="entry name" value="T27367"/>
</dbReference>
<dbReference type="RefSeq" id="NP_501574.1">
    <property type="nucleotide sequence ID" value="NM_069173.7"/>
</dbReference>
<dbReference type="SMR" id="Q9XWC2"/>
<dbReference type="BioGRID" id="42829">
    <property type="interactions" value="2"/>
</dbReference>
<dbReference type="FunCoup" id="Q9XWC2">
    <property type="interactions" value="1522"/>
</dbReference>
<dbReference type="STRING" id="6239.Y73F4A.1.1"/>
<dbReference type="iPTMnet" id="Q9XWC2"/>
<dbReference type="PaxDb" id="6239-Y73F4A.1"/>
<dbReference type="PeptideAtlas" id="Q9XWC2"/>
<dbReference type="EnsemblMetazoa" id="Y73F4A.1.1">
    <property type="protein sequence ID" value="Y73F4A.1.1"/>
    <property type="gene ID" value="WBGene00013514"/>
</dbReference>
<dbReference type="GeneID" id="177723"/>
<dbReference type="KEGG" id="cel:CELE_Y73F4A.1"/>
<dbReference type="UCSC" id="Y73F4A.1">
    <property type="organism name" value="c. elegans"/>
</dbReference>
<dbReference type="AGR" id="WB:WBGene00013514"/>
<dbReference type="CTD" id="177723"/>
<dbReference type="WormBase" id="Y73F4A.1">
    <property type="protein sequence ID" value="CE20367"/>
    <property type="gene ID" value="WBGene00013514"/>
</dbReference>
<dbReference type="eggNOG" id="ENOG502THF3">
    <property type="taxonomic scope" value="Eukaryota"/>
</dbReference>
<dbReference type="GeneTree" id="ENSGT00970000196050"/>
<dbReference type="HOGENOM" id="CLU_1416359_0_0_1"/>
<dbReference type="InParanoid" id="Q9XWC2"/>
<dbReference type="OMA" id="VCAAQCT"/>
<dbReference type="OrthoDB" id="5806303at2759"/>
<dbReference type="PhylomeDB" id="Q9XWC2"/>
<dbReference type="PRO" id="PR:Q9XWC2"/>
<dbReference type="Proteomes" id="UP000001940">
    <property type="component" value="Chromosome IV"/>
</dbReference>
<dbReference type="Bgee" id="WBGene00013514">
    <property type="expression patterns" value="Expressed in adult organism and 3 other cell types or tissues"/>
</dbReference>
<dbReference type="GO" id="GO:0005576">
    <property type="term" value="C:extracellular region"/>
    <property type="evidence" value="ECO:0007669"/>
    <property type="project" value="UniProtKB-SubCell"/>
</dbReference>
<dbReference type="InterPro" id="IPR005018">
    <property type="entry name" value="DOMON_domain"/>
</dbReference>
<dbReference type="PANTHER" id="PTHR36516:SF4">
    <property type="entry name" value="DOMON DOMAIN-CONTAINING PROTEIN Y73F4A.1"/>
    <property type="match status" value="1"/>
</dbReference>
<dbReference type="PANTHER" id="PTHR36516">
    <property type="entry name" value="PROTEIN CBG04168-RELATED"/>
    <property type="match status" value="1"/>
</dbReference>
<dbReference type="Pfam" id="PF03351">
    <property type="entry name" value="DOMON"/>
    <property type="match status" value="1"/>
</dbReference>
<dbReference type="SMART" id="SM00664">
    <property type="entry name" value="DoH"/>
    <property type="match status" value="1"/>
</dbReference>
<dbReference type="PROSITE" id="PS50836">
    <property type="entry name" value="DOMON"/>
    <property type="match status" value="1"/>
</dbReference>
<organism>
    <name type="scientific">Caenorhabditis elegans</name>
    <dbReference type="NCBI Taxonomy" id="6239"/>
    <lineage>
        <taxon>Eukaryota</taxon>
        <taxon>Metazoa</taxon>
        <taxon>Ecdysozoa</taxon>
        <taxon>Nematoda</taxon>
        <taxon>Chromadorea</taxon>
        <taxon>Rhabditida</taxon>
        <taxon>Rhabditina</taxon>
        <taxon>Rhabditomorpha</taxon>
        <taxon>Rhabditoidea</taxon>
        <taxon>Rhabditidae</taxon>
        <taxon>Peloderinae</taxon>
        <taxon>Caenorhabditis</taxon>
    </lineage>
</organism>
<gene>
    <name type="ORF">Y73F4A.1</name>
</gene>
<keyword id="KW-0325">Glycoprotein</keyword>
<keyword id="KW-1185">Reference proteome</keyword>
<keyword id="KW-0964">Secreted</keyword>
<keyword id="KW-0732">Signal</keyword>
<evidence type="ECO:0000255" key="1"/>
<evidence type="ECO:0000255" key="2">
    <source>
        <dbReference type="PROSITE-ProRule" id="PRU00246"/>
    </source>
</evidence>
<evidence type="ECO:0000269" key="3">
    <source>
    </source>
</evidence>
<evidence type="ECO:0000269" key="4">
    <source>
    </source>
</evidence>
<evidence type="ECO:0000269" key="5">
    <source>
    </source>
</evidence>
<evidence type="ECO:0000305" key="6"/>
<comment type="subcellular location">
    <subcellularLocation>
        <location evidence="6">Secreted</location>
    </subcellularLocation>
</comment>
<name>DMON2_CAEEL</name>
<protein>
    <recommendedName>
        <fullName>DOMON domain-containing protein Y73F4A.1</fullName>
    </recommendedName>
</protein>
<sequence length="182" mass="20354">MFVLAIVFAFVFIPSSSSVTCDFKNELVSMNWNVKNNKIQIHFEHNNLTENRWTSIAFGDGPGMNNLESIIFSRREDNVITTNSGYTPKKKKVVVDDVSYVTVNDVQITGNKLKVTVSRPLGPAGPRNFSLDQCLNWMVVPGGSLSNGKFKKHHGKIFFIKDVCAAKCTAERIQRINSNKAL</sequence>
<proteinExistence type="evidence at protein level"/>
<feature type="signal peptide" evidence="1">
    <location>
        <begin position="1"/>
        <end position="18"/>
    </location>
</feature>
<feature type="chain" id="PRO_0000248565" description="DOMON domain-containing protein Y73F4A.1">
    <location>
        <begin position="19"/>
        <end position="182"/>
    </location>
</feature>
<feature type="domain" description="DOMON" evidence="2">
    <location>
        <begin position="26"/>
        <end position="143"/>
    </location>
</feature>
<feature type="glycosylation site" description="N-linked (GlcNAc...) asparagine" evidence="3 4 5">
    <location>
        <position position="47"/>
    </location>
</feature>
<feature type="glycosylation site" description="N-linked (GlcNAc...) asparagine" evidence="1">
    <location>
        <position position="128"/>
    </location>
</feature>